<reference key="1">
    <citation type="journal article" date="2004" name="Nat. Genet.">
        <title>Complete sequencing and characterization of 21,243 full-length human cDNAs.</title>
        <authorList>
            <person name="Ota T."/>
            <person name="Suzuki Y."/>
            <person name="Nishikawa T."/>
            <person name="Otsuki T."/>
            <person name="Sugiyama T."/>
            <person name="Irie R."/>
            <person name="Wakamatsu A."/>
            <person name="Hayashi K."/>
            <person name="Sato H."/>
            <person name="Nagai K."/>
            <person name="Kimura K."/>
            <person name="Makita H."/>
            <person name="Sekine M."/>
            <person name="Obayashi M."/>
            <person name="Nishi T."/>
            <person name="Shibahara T."/>
            <person name="Tanaka T."/>
            <person name="Ishii S."/>
            <person name="Yamamoto J."/>
            <person name="Saito K."/>
            <person name="Kawai Y."/>
            <person name="Isono Y."/>
            <person name="Nakamura Y."/>
            <person name="Nagahari K."/>
            <person name="Murakami K."/>
            <person name="Yasuda T."/>
            <person name="Iwayanagi T."/>
            <person name="Wagatsuma M."/>
            <person name="Shiratori A."/>
            <person name="Sudo H."/>
            <person name="Hosoiri T."/>
            <person name="Kaku Y."/>
            <person name="Kodaira H."/>
            <person name="Kondo H."/>
            <person name="Sugawara M."/>
            <person name="Takahashi M."/>
            <person name="Kanda K."/>
            <person name="Yokoi T."/>
            <person name="Furuya T."/>
            <person name="Kikkawa E."/>
            <person name="Omura Y."/>
            <person name="Abe K."/>
            <person name="Kamihara K."/>
            <person name="Katsuta N."/>
            <person name="Sato K."/>
            <person name="Tanikawa M."/>
            <person name="Yamazaki M."/>
            <person name="Ninomiya K."/>
            <person name="Ishibashi T."/>
            <person name="Yamashita H."/>
            <person name="Murakawa K."/>
            <person name="Fujimori K."/>
            <person name="Tanai H."/>
            <person name="Kimata M."/>
            <person name="Watanabe M."/>
            <person name="Hiraoka S."/>
            <person name="Chiba Y."/>
            <person name="Ishida S."/>
            <person name="Ono Y."/>
            <person name="Takiguchi S."/>
            <person name="Watanabe S."/>
            <person name="Yosida M."/>
            <person name="Hotuta T."/>
            <person name="Kusano J."/>
            <person name="Kanehori K."/>
            <person name="Takahashi-Fujii A."/>
            <person name="Hara H."/>
            <person name="Tanase T.-O."/>
            <person name="Nomura Y."/>
            <person name="Togiya S."/>
            <person name="Komai F."/>
            <person name="Hara R."/>
            <person name="Takeuchi K."/>
            <person name="Arita M."/>
            <person name="Imose N."/>
            <person name="Musashino K."/>
            <person name="Yuuki H."/>
            <person name="Oshima A."/>
            <person name="Sasaki N."/>
            <person name="Aotsuka S."/>
            <person name="Yoshikawa Y."/>
            <person name="Matsunawa H."/>
            <person name="Ichihara T."/>
            <person name="Shiohata N."/>
            <person name="Sano S."/>
            <person name="Moriya S."/>
            <person name="Momiyama H."/>
            <person name="Satoh N."/>
            <person name="Takami S."/>
            <person name="Terashima Y."/>
            <person name="Suzuki O."/>
            <person name="Nakagawa S."/>
            <person name="Senoh A."/>
            <person name="Mizoguchi H."/>
            <person name="Goto Y."/>
            <person name="Shimizu F."/>
            <person name="Wakebe H."/>
            <person name="Hishigaki H."/>
            <person name="Watanabe T."/>
            <person name="Sugiyama A."/>
            <person name="Takemoto M."/>
            <person name="Kawakami B."/>
            <person name="Yamazaki M."/>
            <person name="Watanabe K."/>
            <person name="Kumagai A."/>
            <person name="Itakura S."/>
            <person name="Fukuzumi Y."/>
            <person name="Fujimori Y."/>
            <person name="Komiyama M."/>
            <person name="Tashiro H."/>
            <person name="Tanigami A."/>
            <person name="Fujiwara T."/>
            <person name="Ono T."/>
            <person name="Yamada K."/>
            <person name="Fujii Y."/>
            <person name="Ozaki K."/>
            <person name="Hirao M."/>
            <person name="Ohmori Y."/>
            <person name="Kawabata A."/>
            <person name="Hikiji T."/>
            <person name="Kobatake N."/>
            <person name="Inagaki H."/>
            <person name="Ikema Y."/>
            <person name="Okamoto S."/>
            <person name="Okitani R."/>
            <person name="Kawakami T."/>
            <person name="Noguchi S."/>
            <person name="Itoh T."/>
            <person name="Shigeta K."/>
            <person name="Senba T."/>
            <person name="Matsumura K."/>
            <person name="Nakajima Y."/>
            <person name="Mizuno T."/>
            <person name="Morinaga M."/>
            <person name="Sasaki M."/>
            <person name="Togashi T."/>
            <person name="Oyama M."/>
            <person name="Hata H."/>
            <person name="Watanabe M."/>
            <person name="Komatsu T."/>
            <person name="Mizushima-Sugano J."/>
            <person name="Satoh T."/>
            <person name="Shirai Y."/>
            <person name="Takahashi Y."/>
            <person name="Nakagawa K."/>
            <person name="Okumura K."/>
            <person name="Nagase T."/>
            <person name="Nomura N."/>
            <person name="Kikuchi H."/>
            <person name="Masuho Y."/>
            <person name="Yamashita R."/>
            <person name="Nakai K."/>
            <person name="Yada T."/>
            <person name="Nakamura Y."/>
            <person name="Ohara O."/>
            <person name="Isogai T."/>
            <person name="Sugano S."/>
        </authorList>
    </citation>
    <scope>NUCLEOTIDE SEQUENCE [LARGE SCALE MRNA] (ISOFORM 3)</scope>
    <source>
        <tissue>Testis</tissue>
    </source>
</reference>
<reference key="2">
    <citation type="journal article" date="2006" name="Nature">
        <title>DNA sequence of human chromosome 17 and analysis of rearrangement in the human lineage.</title>
        <authorList>
            <person name="Zody M.C."/>
            <person name="Garber M."/>
            <person name="Adams D.J."/>
            <person name="Sharpe T."/>
            <person name="Harrow J."/>
            <person name="Lupski J.R."/>
            <person name="Nicholson C."/>
            <person name="Searle S.M."/>
            <person name="Wilming L."/>
            <person name="Young S.K."/>
            <person name="Abouelleil A."/>
            <person name="Allen N.R."/>
            <person name="Bi W."/>
            <person name="Bloom T."/>
            <person name="Borowsky M.L."/>
            <person name="Bugalter B.E."/>
            <person name="Butler J."/>
            <person name="Chang J.L."/>
            <person name="Chen C.-K."/>
            <person name="Cook A."/>
            <person name="Corum B."/>
            <person name="Cuomo C.A."/>
            <person name="de Jong P.J."/>
            <person name="DeCaprio D."/>
            <person name="Dewar K."/>
            <person name="FitzGerald M."/>
            <person name="Gilbert J."/>
            <person name="Gibson R."/>
            <person name="Gnerre S."/>
            <person name="Goldstein S."/>
            <person name="Grafham D.V."/>
            <person name="Grocock R."/>
            <person name="Hafez N."/>
            <person name="Hagopian D.S."/>
            <person name="Hart E."/>
            <person name="Norman C.H."/>
            <person name="Humphray S."/>
            <person name="Jaffe D.B."/>
            <person name="Jones M."/>
            <person name="Kamal M."/>
            <person name="Khodiyar V.K."/>
            <person name="LaButti K."/>
            <person name="Laird G."/>
            <person name="Lehoczky J."/>
            <person name="Liu X."/>
            <person name="Lokyitsang T."/>
            <person name="Loveland J."/>
            <person name="Lui A."/>
            <person name="Macdonald P."/>
            <person name="Major J.E."/>
            <person name="Matthews L."/>
            <person name="Mauceli E."/>
            <person name="McCarroll S.A."/>
            <person name="Mihalev A.H."/>
            <person name="Mudge J."/>
            <person name="Nguyen C."/>
            <person name="Nicol R."/>
            <person name="O'Leary S.B."/>
            <person name="Osoegawa K."/>
            <person name="Schwartz D.C."/>
            <person name="Shaw-Smith C."/>
            <person name="Stankiewicz P."/>
            <person name="Steward C."/>
            <person name="Swarbreck D."/>
            <person name="Venkataraman V."/>
            <person name="Whittaker C.A."/>
            <person name="Yang X."/>
            <person name="Zimmer A.R."/>
            <person name="Bradley A."/>
            <person name="Hubbard T."/>
            <person name="Birren B.W."/>
            <person name="Rogers J."/>
            <person name="Lander E.S."/>
            <person name="Nusbaum C."/>
        </authorList>
    </citation>
    <scope>NUCLEOTIDE SEQUENCE [LARGE SCALE GENOMIC DNA]</scope>
</reference>
<reference key="3">
    <citation type="submission" date="2005-07" db="EMBL/GenBank/DDBJ databases">
        <authorList>
            <person name="Mural R.J."/>
            <person name="Istrail S."/>
            <person name="Sutton G.G."/>
            <person name="Florea L."/>
            <person name="Halpern A.L."/>
            <person name="Mobarry C.M."/>
            <person name="Lippert R."/>
            <person name="Walenz B."/>
            <person name="Shatkay H."/>
            <person name="Dew I."/>
            <person name="Miller J.R."/>
            <person name="Flanigan M.J."/>
            <person name="Edwards N.J."/>
            <person name="Bolanos R."/>
            <person name="Fasulo D."/>
            <person name="Halldorsson B.V."/>
            <person name="Hannenhalli S."/>
            <person name="Turner R."/>
            <person name="Yooseph S."/>
            <person name="Lu F."/>
            <person name="Nusskern D.R."/>
            <person name="Shue B.C."/>
            <person name="Zheng X.H."/>
            <person name="Zhong F."/>
            <person name="Delcher A.L."/>
            <person name="Huson D.H."/>
            <person name="Kravitz S.A."/>
            <person name="Mouchard L."/>
            <person name="Reinert K."/>
            <person name="Remington K.A."/>
            <person name="Clark A.G."/>
            <person name="Waterman M.S."/>
            <person name="Eichler E.E."/>
            <person name="Adams M.D."/>
            <person name="Hunkapiller M.W."/>
            <person name="Myers E.W."/>
            <person name="Venter J.C."/>
        </authorList>
    </citation>
    <scope>NUCLEOTIDE SEQUENCE [LARGE SCALE GENOMIC DNA]</scope>
</reference>
<reference key="4">
    <citation type="journal article" date="2004" name="Genome Res.">
        <title>The status, quality, and expansion of the NIH full-length cDNA project: the Mammalian Gene Collection (MGC).</title>
        <authorList>
            <consortium name="The MGC Project Team"/>
        </authorList>
    </citation>
    <scope>NUCLEOTIDE SEQUENCE [LARGE SCALE MRNA] (ISOFORM 2)</scope>
    <source>
        <tissue>Testis</tissue>
    </source>
</reference>
<reference key="5">
    <citation type="journal article" date="2004" name="J. Biol. Chem.">
        <title>Identification of interaction partners and substrates of the cyclin A1-CDK2 complex.</title>
        <authorList>
            <person name="Diederichs S."/>
            <person name="Baeumer N."/>
            <person name="Ji P."/>
            <person name="Metzelder S.K."/>
            <person name="Idos G.E."/>
            <person name="Cauvet T."/>
            <person name="Wang W."/>
            <person name="Moeller M."/>
            <person name="Pierschalski S."/>
            <person name="Gromoll J."/>
            <person name="Schrader M.G."/>
            <person name="Koeffler H.P."/>
            <person name="Berdel W.E."/>
            <person name="Serve H."/>
            <person name="Mueller-Tidow C."/>
        </authorList>
    </citation>
    <scope>NUCLEOTIDE SEQUENCE [MRNA] OF 1-81 (ISOFORM 3)</scope>
    <scope>TISSUE SPECIFICITY</scope>
</reference>
<sequence>MWVRTTLTIERWTKEKTEPKARSWDEALSDVNRLPSWERGHLLAGVASSTDVSTFSEGGDCKEPDKCCWRHKQCTGHIIYPFASDCVRHSLHLHSVNHCNCNSRLKDSSEDSSSSRGAGPTCSHVIESPCFELTPEEEHVERFRYGWCKSYRPVSVAVIHHPLYHECGADDLNEEEEEEEEESKPPIPTQVGPATASPDLGTSMATGTPDSTAPITIWRSESPTGKGQGSKVIKKVKKKKEKEKDKEEMDEKAKLKKKAKKGQLTKKKSPVKLEPSPPDVSRSLSARQLARMSESSPESREELESEDSYNGRGQGELSSEDIVESSSPRKRENTVQAKKTGAKPSQARKVNKRKSPPGSNPNLS</sequence>
<comment type="interaction">
    <interactant intactId="EBI-25836043">
        <id>Q8NCQ7-2</id>
    </interactant>
    <interactant intactId="EBI-718729">
        <id>P55212</id>
        <label>CASP6</label>
    </interactant>
    <organismsDiffer>false</organismsDiffer>
    <experiments>3</experiments>
</comment>
<comment type="interaction">
    <interactant intactId="EBI-25836043">
        <id>Q8NCQ7-2</id>
    </interactant>
    <interactant intactId="EBI-473886">
        <id>O00291</id>
        <label>HIP1</label>
    </interactant>
    <organismsDiffer>false</organismsDiffer>
    <experiments>3</experiments>
</comment>
<comment type="interaction">
    <interactant intactId="EBI-25836043">
        <id>Q8NCQ7-2</id>
    </interactant>
    <interactant intactId="EBI-21591415">
        <id>P13473-2</id>
        <label>LAMP2</label>
    </interactant>
    <organismsDiffer>false</organismsDiffer>
    <experiments>3</experiments>
</comment>
<comment type="alternative products">
    <event type="alternative splicing"/>
    <isoform>
        <id>Q8NCQ7-1</id>
        <name>1</name>
        <sequence type="displayed"/>
    </isoform>
    <isoform>
        <id>Q8NCQ7-2</id>
        <name>2</name>
        <sequence type="described" ref="VSP_033988"/>
    </isoform>
    <isoform>
        <id>Q8NCQ7-3</id>
        <name>3</name>
        <sequence type="described" ref="VSP_053931 VSP_053932"/>
    </isoform>
</comment>
<comment type="tissue specificity">
    <text evidence="3">High expressed in testis.</text>
</comment>
<comment type="similarity">
    <text evidence="7">Belongs to the PROCA1 family.</text>
</comment>
<comment type="caution">
    <text evidence="8">Was originally thought to interact with CCNA1 and found in a complex with CCNA1 and CDK2 (PubMed:15159402). However the amino acid sequence described in this paper contains several frameshifts and a wrong choice of frame, so results from this paper need to be validated.</text>
</comment>
<comment type="sequence caution" evidence="7">
    <conflict type="erroneous translation">
        <sequence resource="EMBL-CDS" id="AAT09159"/>
    </conflict>
    <text>Wrong choice of frame.</text>
</comment>
<comment type="sequence caution" evidence="7">
    <conflict type="frameshift">
        <sequence resource="EMBL-CDS" id="AAT09159"/>
    </conflict>
</comment>
<comment type="sequence caution" evidence="7">
    <molecule>Isoform 3</molecule>
    <conflict type="frameshift">
        <sequence resource="EMBL-CDS" id="AAT09159"/>
    </conflict>
</comment>
<feature type="chain" id="PRO_0000336063" description="Protein PROCA1">
    <location>
        <begin position="1"/>
        <end position="364"/>
    </location>
</feature>
<feature type="region of interest" description="Disordered" evidence="2">
    <location>
        <begin position="172"/>
        <end position="364"/>
    </location>
</feature>
<feature type="compositionally biased region" description="Acidic residues" evidence="2">
    <location>
        <begin position="172"/>
        <end position="182"/>
    </location>
</feature>
<feature type="compositionally biased region" description="Polar residues" evidence="2">
    <location>
        <begin position="203"/>
        <end position="223"/>
    </location>
</feature>
<feature type="compositionally biased region" description="Basic residues" evidence="2">
    <location>
        <begin position="232"/>
        <end position="241"/>
    </location>
</feature>
<feature type="compositionally biased region" description="Basic and acidic residues" evidence="2">
    <location>
        <begin position="242"/>
        <end position="253"/>
    </location>
</feature>
<feature type="compositionally biased region" description="Basic residues" evidence="2">
    <location>
        <begin position="254"/>
        <end position="270"/>
    </location>
</feature>
<feature type="modified residue" description="Phosphoserine" evidence="1">
    <location>
        <position position="276"/>
    </location>
</feature>
<feature type="modified residue" description="Phosphoserine" evidence="1">
    <location>
        <position position="308"/>
    </location>
</feature>
<feature type="modified residue" description="Phosphoserine" evidence="1">
    <location>
        <position position="318"/>
    </location>
</feature>
<feature type="modified residue" description="Phosphoserine" evidence="1">
    <location>
        <position position="319"/>
    </location>
</feature>
<feature type="modified residue" description="Phosphoserine" evidence="1">
    <location>
        <position position="355"/>
    </location>
</feature>
<feature type="modified residue" description="Phosphoserine" evidence="1">
    <location>
        <position position="364"/>
    </location>
</feature>
<feature type="splice variant" id="VSP_053931" description="In isoform 3." evidence="4">
    <original>MWVRTTLTIERWTKEKTEPKARSWDEALSD</original>
    <variation>MSITY</variation>
    <location>
        <begin position="1"/>
        <end position="30"/>
    </location>
</feature>
<feature type="splice variant" id="VSP_033988" description="In isoform 2." evidence="6">
    <original>ALSDVNRLPSWERGHLLAGVASSTDVSTFSEG</original>
    <variation>SRCR</variation>
    <location>
        <begin position="27"/>
        <end position="58"/>
    </location>
</feature>
<feature type="splice variant" id="VSP_053932" description="In isoform 3." evidence="4">
    <location>
        <position position="58"/>
    </location>
</feature>
<feature type="sequence variant" id="VAR_043476" description="In dbSNP:rs1077127.">
    <original>D</original>
    <variation>A</variation>
    <location>
        <position position="245"/>
    </location>
</feature>
<feature type="sequence variant" id="VAR_043477" description="In dbSNP:rs3744637.">
    <original>E</original>
    <variation>K</variation>
    <location>
        <position position="320"/>
    </location>
</feature>
<feature type="sequence conflict" description="In Ref. 1; BAG63307." evidence="7" ref="1">
    <original>H</original>
    <variation>Y</variation>
    <location>
        <position position="89"/>
    </location>
</feature>
<accession>Q8NCQ7</accession>
<accession>B4DX95</accession>
<accession>G5E9R8</accession>
<accession>Q6PKN3</accession>
<organism>
    <name type="scientific">Homo sapiens</name>
    <name type="common">Human</name>
    <dbReference type="NCBI Taxonomy" id="9606"/>
    <lineage>
        <taxon>Eukaryota</taxon>
        <taxon>Metazoa</taxon>
        <taxon>Chordata</taxon>
        <taxon>Craniata</taxon>
        <taxon>Vertebrata</taxon>
        <taxon>Euteleostomi</taxon>
        <taxon>Mammalia</taxon>
        <taxon>Eutheria</taxon>
        <taxon>Euarchontoglires</taxon>
        <taxon>Primates</taxon>
        <taxon>Haplorrhini</taxon>
        <taxon>Catarrhini</taxon>
        <taxon>Hominidae</taxon>
        <taxon>Homo</taxon>
    </lineage>
</organism>
<name>PRCA1_HUMAN</name>
<gene>
    <name type="primary">PROCA1</name>
</gene>
<evidence type="ECO:0000250" key="1">
    <source>
        <dbReference type="UniProtKB" id="Q4V7B4"/>
    </source>
</evidence>
<evidence type="ECO:0000256" key="2">
    <source>
        <dbReference type="SAM" id="MobiDB-lite"/>
    </source>
</evidence>
<evidence type="ECO:0000269" key="3">
    <source>
    </source>
</evidence>
<evidence type="ECO:0000303" key="4">
    <source>
    </source>
</evidence>
<evidence type="ECO:0000303" key="5">
    <source>
    </source>
</evidence>
<evidence type="ECO:0000303" key="6">
    <source>
    </source>
</evidence>
<evidence type="ECO:0000305" key="7"/>
<evidence type="ECO:0000305" key="8">
    <source>
    </source>
</evidence>
<dbReference type="EMBL" id="AK301868">
    <property type="protein sequence ID" value="BAG63307.1"/>
    <property type="molecule type" value="mRNA"/>
</dbReference>
<dbReference type="EMBL" id="AC010761">
    <property type="status" value="NOT_ANNOTATED_CDS"/>
    <property type="molecule type" value="Genomic_DNA"/>
</dbReference>
<dbReference type="EMBL" id="CH471159">
    <property type="protein sequence ID" value="EAW51125.1"/>
    <property type="molecule type" value="Genomic_DNA"/>
</dbReference>
<dbReference type="EMBL" id="CH471159">
    <property type="protein sequence ID" value="EAW51126.1"/>
    <property type="molecule type" value="Genomic_DNA"/>
</dbReference>
<dbReference type="EMBL" id="BC029574">
    <property type="protein sequence ID" value="AAH29574.1"/>
    <property type="molecule type" value="mRNA"/>
</dbReference>
<dbReference type="EMBL" id="AY601916">
    <property type="protein sequence ID" value="AAT09159.1"/>
    <property type="status" value="ALT_SEQ"/>
    <property type="molecule type" value="mRNA"/>
</dbReference>
<dbReference type="CCDS" id="CCDS11239.1">
    <molecule id="Q8NCQ7-2"/>
</dbReference>
<dbReference type="RefSeq" id="NP_001291878.1">
    <property type="nucleotide sequence ID" value="NM_001304949.1"/>
</dbReference>
<dbReference type="RefSeq" id="NP_001291880.1">
    <property type="nucleotide sequence ID" value="NM_001304951.1"/>
</dbReference>
<dbReference type="RefSeq" id="NP_001291881.1">
    <molecule id="Q8NCQ7-3"/>
    <property type="nucleotide sequence ID" value="NM_001304952.2"/>
</dbReference>
<dbReference type="RefSeq" id="NP_001291882.1">
    <property type="nucleotide sequence ID" value="NM_001304953.1"/>
</dbReference>
<dbReference type="RefSeq" id="NP_001291883.1">
    <property type="nucleotide sequence ID" value="NM_001304954.1"/>
</dbReference>
<dbReference type="RefSeq" id="NP_689678.1">
    <molecule id="Q8NCQ7-2"/>
    <property type="nucleotide sequence ID" value="NM_152465.3"/>
</dbReference>
<dbReference type="BioGRID" id="127029">
    <property type="interactions" value="4"/>
</dbReference>
<dbReference type="FunCoup" id="Q8NCQ7">
    <property type="interactions" value="5"/>
</dbReference>
<dbReference type="IntAct" id="Q8NCQ7">
    <property type="interactions" value="4"/>
</dbReference>
<dbReference type="STRING" id="9606.ENSP00000301039"/>
<dbReference type="GlyGen" id="Q8NCQ7">
    <property type="glycosylation" value="1 site"/>
</dbReference>
<dbReference type="iPTMnet" id="Q8NCQ7"/>
<dbReference type="PhosphoSitePlus" id="Q8NCQ7"/>
<dbReference type="BioMuta" id="PROCA1"/>
<dbReference type="DMDM" id="189037421"/>
<dbReference type="MassIVE" id="Q8NCQ7"/>
<dbReference type="PaxDb" id="9606-ENSP00000301039"/>
<dbReference type="PeptideAtlas" id="Q8NCQ7"/>
<dbReference type="ProteomicsDB" id="34024"/>
<dbReference type="ProteomicsDB" id="72923">
    <molecule id="Q8NCQ7-1"/>
</dbReference>
<dbReference type="ProteomicsDB" id="72924">
    <molecule id="Q8NCQ7-2"/>
</dbReference>
<dbReference type="Antibodypedia" id="14279">
    <property type="antibodies" value="71 antibodies from 13 providers"/>
</dbReference>
<dbReference type="DNASU" id="147011"/>
<dbReference type="Ensembl" id="ENST00000301039.6">
    <molecule id="Q8NCQ7-2"/>
    <property type="protein sequence ID" value="ENSP00000301039.2"/>
    <property type="gene ID" value="ENSG00000167525.16"/>
</dbReference>
<dbReference type="GeneID" id="147011"/>
<dbReference type="KEGG" id="hsa:147011"/>
<dbReference type="UCSC" id="uc002hca.2">
    <molecule id="Q8NCQ7-1"/>
    <property type="organism name" value="human"/>
</dbReference>
<dbReference type="AGR" id="HGNC:28600"/>
<dbReference type="CTD" id="147011"/>
<dbReference type="DisGeNET" id="147011"/>
<dbReference type="GeneCards" id="PROCA1"/>
<dbReference type="HGNC" id="HGNC:28600">
    <property type="gene designation" value="PROCA1"/>
</dbReference>
<dbReference type="HPA" id="ENSG00000167525">
    <property type="expression patterns" value="Tissue enriched (testis)"/>
</dbReference>
<dbReference type="MIM" id="617376">
    <property type="type" value="gene"/>
</dbReference>
<dbReference type="neXtProt" id="NX_Q8NCQ7"/>
<dbReference type="OpenTargets" id="ENSG00000167525"/>
<dbReference type="PharmGKB" id="PA165432492"/>
<dbReference type="VEuPathDB" id="HostDB:ENSG00000167525"/>
<dbReference type="eggNOG" id="ENOG502QTYI">
    <property type="taxonomic scope" value="Eukaryota"/>
</dbReference>
<dbReference type="GeneTree" id="ENSGT00940000162235"/>
<dbReference type="InParanoid" id="Q8NCQ7"/>
<dbReference type="OMA" id="IHPFSDC"/>
<dbReference type="OrthoDB" id="6075074at2759"/>
<dbReference type="PAN-GO" id="Q8NCQ7">
    <property type="GO annotations" value="0 GO annotations based on evolutionary models"/>
</dbReference>
<dbReference type="PhylomeDB" id="Q8NCQ7"/>
<dbReference type="TreeFam" id="TF350402"/>
<dbReference type="PathwayCommons" id="Q8NCQ7"/>
<dbReference type="SignaLink" id="Q8NCQ7"/>
<dbReference type="BioGRID-ORCS" id="147011">
    <property type="hits" value="78 hits in 1158 CRISPR screens"/>
</dbReference>
<dbReference type="CD-CODE" id="91857CE7">
    <property type="entry name" value="Nucleolus"/>
</dbReference>
<dbReference type="ChiTaRS" id="PROCA1">
    <property type="organism name" value="human"/>
</dbReference>
<dbReference type="GenomeRNAi" id="147011"/>
<dbReference type="Pharos" id="Q8NCQ7">
    <property type="development level" value="Tbio"/>
</dbReference>
<dbReference type="PRO" id="PR:Q8NCQ7"/>
<dbReference type="Proteomes" id="UP000005640">
    <property type="component" value="Chromosome 17"/>
</dbReference>
<dbReference type="RNAct" id="Q8NCQ7">
    <property type="molecule type" value="protein"/>
</dbReference>
<dbReference type="Bgee" id="ENSG00000167525">
    <property type="expression patterns" value="Expressed in left testis and 108 other cell types or tissues"/>
</dbReference>
<dbReference type="ExpressionAtlas" id="Q8NCQ7">
    <property type="expression patterns" value="baseline and differential"/>
</dbReference>
<dbReference type="GO" id="GO:0030332">
    <property type="term" value="F:cyclin binding"/>
    <property type="evidence" value="ECO:0000353"/>
    <property type="project" value="UniProtKB"/>
</dbReference>
<dbReference type="GO" id="GO:0004623">
    <property type="term" value="F:phospholipase A2 activity"/>
    <property type="evidence" value="ECO:0007669"/>
    <property type="project" value="InterPro"/>
</dbReference>
<dbReference type="GO" id="GO:0050482">
    <property type="term" value="P:arachidonate secretion"/>
    <property type="evidence" value="ECO:0007669"/>
    <property type="project" value="InterPro"/>
</dbReference>
<dbReference type="GO" id="GO:0006644">
    <property type="term" value="P:phospholipid metabolic process"/>
    <property type="evidence" value="ECO:0007669"/>
    <property type="project" value="InterPro"/>
</dbReference>
<dbReference type="CDD" id="cd04705">
    <property type="entry name" value="PLA2_group_III_like"/>
    <property type="match status" value="1"/>
</dbReference>
<dbReference type="Gene3D" id="1.20.90.10">
    <property type="entry name" value="Phospholipase A2 domain"/>
    <property type="match status" value="1"/>
</dbReference>
<dbReference type="InterPro" id="IPR016090">
    <property type="entry name" value="PLipase_A2_dom"/>
</dbReference>
<dbReference type="InterPro" id="IPR036444">
    <property type="entry name" value="PLipase_A2_dom_sf"/>
</dbReference>
<dbReference type="PANTHER" id="PTHR12253">
    <property type="entry name" value="RH14732P"/>
    <property type="match status" value="1"/>
</dbReference>
<dbReference type="Pfam" id="PF05826">
    <property type="entry name" value="Phospholip_A2_2"/>
    <property type="match status" value="1"/>
</dbReference>
<dbReference type="SUPFAM" id="SSF48619">
    <property type="entry name" value="Phospholipase A2, PLA2"/>
    <property type="match status" value="1"/>
</dbReference>
<protein>
    <recommendedName>
        <fullName evidence="7">Protein PROCA1</fullName>
    </recommendedName>
    <alternativeName>
        <fullName evidence="5">Protein interacting with cyclin A1</fullName>
    </alternativeName>
</protein>
<keyword id="KW-0025">Alternative splicing</keyword>
<keyword id="KW-0597">Phosphoprotein</keyword>
<keyword id="KW-1267">Proteomics identification</keyword>
<keyword id="KW-1185">Reference proteome</keyword>
<proteinExistence type="evidence at protein level"/>